<protein>
    <recommendedName>
        <fullName evidence="1">NAD kinase 2</fullName>
        <ecNumber evidence="1">2.7.1.23</ecNumber>
    </recommendedName>
    <alternativeName>
        <fullName evidence="1">ATP-dependent NAD kinase 2</fullName>
    </alternativeName>
</protein>
<sequence length="267" mass="30317">MADRRNLFFFYGDDKATLVEKMKPIYRILEENGFTILDHPKNANAIVSVGDDATFLQAVRKTGFREDCLYAGISTKDEISFYCDFHIDHVDTALQEITKNEIEVRKYPTIQVDVDGSTSFHCLNEFSLRSSIIKTFVVDVHVDDLYFETFRGDGLVVSTPTGSTAYNKSLHGAVVDPLIPCFQVSELASLNNNTYRTLGSPFILNHERTLTLKLRPDGNDYPVIGMDNEALSIKQVEKAVVRLSDKQIKTVKLKNNSFWEKVQRTFL</sequence>
<evidence type="ECO:0000255" key="1">
    <source>
        <dbReference type="HAMAP-Rule" id="MF_00361"/>
    </source>
</evidence>
<feature type="chain" id="PRO_0000120594" description="NAD kinase 2">
    <location>
        <begin position="1"/>
        <end position="267"/>
    </location>
</feature>
<feature type="active site" description="Proton acceptor" evidence="1">
    <location>
        <position position="52"/>
    </location>
</feature>
<feature type="binding site" evidence="1">
    <location>
        <begin position="52"/>
        <end position="53"/>
    </location>
    <ligand>
        <name>NAD(+)</name>
        <dbReference type="ChEBI" id="CHEBI:57540"/>
    </ligand>
</feature>
<feature type="binding site" evidence="1">
    <location>
        <begin position="124"/>
        <end position="125"/>
    </location>
    <ligand>
        <name>NAD(+)</name>
        <dbReference type="ChEBI" id="CHEBI:57540"/>
    </ligand>
</feature>
<feature type="binding site" evidence="1">
    <location>
        <position position="151"/>
    </location>
    <ligand>
        <name>NAD(+)</name>
        <dbReference type="ChEBI" id="CHEBI:57540"/>
    </ligand>
</feature>
<feature type="binding site" evidence="1">
    <location>
        <position position="153"/>
    </location>
    <ligand>
        <name>NAD(+)</name>
        <dbReference type="ChEBI" id="CHEBI:57540"/>
    </ligand>
</feature>
<feature type="binding site" evidence="1">
    <location>
        <begin position="164"/>
        <end position="169"/>
    </location>
    <ligand>
        <name>NAD(+)</name>
        <dbReference type="ChEBI" id="CHEBI:57540"/>
    </ligand>
</feature>
<feature type="binding site" evidence="1">
    <location>
        <position position="188"/>
    </location>
    <ligand>
        <name>NAD(+)</name>
        <dbReference type="ChEBI" id="CHEBI:57540"/>
    </ligand>
</feature>
<reference key="1">
    <citation type="journal article" date="2003" name="Nature">
        <title>Genome sequence of Bacillus cereus and comparative analysis with Bacillus anthracis.</title>
        <authorList>
            <person name="Ivanova N."/>
            <person name="Sorokin A."/>
            <person name="Anderson I."/>
            <person name="Galleron N."/>
            <person name="Candelon B."/>
            <person name="Kapatral V."/>
            <person name="Bhattacharyya A."/>
            <person name="Reznik G."/>
            <person name="Mikhailova N."/>
            <person name="Lapidus A."/>
            <person name="Chu L."/>
            <person name="Mazur M."/>
            <person name="Goltsman E."/>
            <person name="Larsen N."/>
            <person name="D'Souza M."/>
            <person name="Walunas T."/>
            <person name="Grechkin Y."/>
            <person name="Pusch G."/>
            <person name="Haselkorn R."/>
            <person name="Fonstein M."/>
            <person name="Ehrlich S.D."/>
            <person name="Overbeek R."/>
            <person name="Kyrpides N.C."/>
        </authorList>
    </citation>
    <scope>NUCLEOTIDE SEQUENCE [LARGE SCALE GENOMIC DNA]</scope>
    <source>
        <strain>ATCC 14579 / DSM 31 / CCUG 7414 / JCM 2152 / NBRC 15305 / NCIMB 9373 / NCTC 2599 / NRRL B-3711</strain>
    </source>
</reference>
<dbReference type="EC" id="2.7.1.23" evidence="1"/>
<dbReference type="EMBL" id="AE016877">
    <property type="protein sequence ID" value="AAP11549.1"/>
    <property type="molecule type" value="Genomic_DNA"/>
</dbReference>
<dbReference type="RefSeq" id="NP_834348.1">
    <property type="nucleotide sequence ID" value="NC_004722.1"/>
</dbReference>
<dbReference type="RefSeq" id="WP_000785177.1">
    <property type="nucleotide sequence ID" value="NZ_CP138336.1"/>
</dbReference>
<dbReference type="SMR" id="Q817B5"/>
<dbReference type="STRING" id="226900.BC_4642"/>
<dbReference type="KEGG" id="bce:BC4642"/>
<dbReference type="PATRIC" id="fig|226900.8.peg.4806"/>
<dbReference type="HOGENOM" id="CLU_008831_0_3_9"/>
<dbReference type="OrthoDB" id="9774737at2"/>
<dbReference type="Proteomes" id="UP000001417">
    <property type="component" value="Chromosome"/>
</dbReference>
<dbReference type="GO" id="GO:0005737">
    <property type="term" value="C:cytoplasm"/>
    <property type="evidence" value="ECO:0007669"/>
    <property type="project" value="UniProtKB-SubCell"/>
</dbReference>
<dbReference type="GO" id="GO:0005524">
    <property type="term" value="F:ATP binding"/>
    <property type="evidence" value="ECO:0007669"/>
    <property type="project" value="UniProtKB-KW"/>
</dbReference>
<dbReference type="GO" id="GO:0046872">
    <property type="term" value="F:metal ion binding"/>
    <property type="evidence" value="ECO:0007669"/>
    <property type="project" value="UniProtKB-UniRule"/>
</dbReference>
<dbReference type="GO" id="GO:0051287">
    <property type="term" value="F:NAD binding"/>
    <property type="evidence" value="ECO:0007669"/>
    <property type="project" value="UniProtKB-ARBA"/>
</dbReference>
<dbReference type="GO" id="GO:0003951">
    <property type="term" value="F:NAD+ kinase activity"/>
    <property type="evidence" value="ECO:0000318"/>
    <property type="project" value="GO_Central"/>
</dbReference>
<dbReference type="GO" id="GO:0019674">
    <property type="term" value="P:NAD metabolic process"/>
    <property type="evidence" value="ECO:0007669"/>
    <property type="project" value="InterPro"/>
</dbReference>
<dbReference type="GO" id="GO:0006741">
    <property type="term" value="P:NADP biosynthetic process"/>
    <property type="evidence" value="ECO:0000318"/>
    <property type="project" value="GO_Central"/>
</dbReference>
<dbReference type="FunFam" id="2.60.200.30:FF:000002">
    <property type="entry name" value="NAD kinase"/>
    <property type="match status" value="1"/>
</dbReference>
<dbReference type="FunFam" id="3.40.50.10330:FF:000017">
    <property type="entry name" value="NAD kinase"/>
    <property type="match status" value="1"/>
</dbReference>
<dbReference type="Gene3D" id="3.40.50.10330">
    <property type="entry name" value="Probable inorganic polyphosphate/atp-NAD kinase, domain 1"/>
    <property type="match status" value="1"/>
</dbReference>
<dbReference type="Gene3D" id="2.60.200.30">
    <property type="entry name" value="Probable inorganic polyphosphate/atp-NAD kinase, domain 2"/>
    <property type="match status" value="1"/>
</dbReference>
<dbReference type="HAMAP" id="MF_00361">
    <property type="entry name" value="NAD_kinase"/>
    <property type="match status" value="1"/>
</dbReference>
<dbReference type="InterPro" id="IPR017438">
    <property type="entry name" value="ATP-NAD_kinase_N"/>
</dbReference>
<dbReference type="InterPro" id="IPR017437">
    <property type="entry name" value="ATP-NAD_kinase_PpnK-typ_C"/>
</dbReference>
<dbReference type="InterPro" id="IPR016064">
    <property type="entry name" value="NAD/diacylglycerol_kinase_sf"/>
</dbReference>
<dbReference type="InterPro" id="IPR002504">
    <property type="entry name" value="NADK"/>
</dbReference>
<dbReference type="NCBIfam" id="NF002902">
    <property type="entry name" value="PRK03501.1"/>
    <property type="match status" value="1"/>
</dbReference>
<dbReference type="PANTHER" id="PTHR20275">
    <property type="entry name" value="NAD KINASE"/>
    <property type="match status" value="1"/>
</dbReference>
<dbReference type="PANTHER" id="PTHR20275:SF9">
    <property type="entry name" value="NAD KINASE 2"/>
    <property type="match status" value="1"/>
</dbReference>
<dbReference type="Pfam" id="PF20143">
    <property type="entry name" value="NAD_kinase_C"/>
    <property type="match status" value="1"/>
</dbReference>
<dbReference type="SUPFAM" id="SSF111331">
    <property type="entry name" value="NAD kinase/diacylglycerol kinase-like"/>
    <property type="match status" value="1"/>
</dbReference>
<name>NADK2_BACCR</name>
<keyword id="KW-0067">ATP-binding</keyword>
<keyword id="KW-0963">Cytoplasm</keyword>
<keyword id="KW-0418">Kinase</keyword>
<keyword id="KW-0520">NAD</keyword>
<keyword id="KW-0521">NADP</keyword>
<keyword id="KW-0547">Nucleotide-binding</keyword>
<keyword id="KW-1185">Reference proteome</keyword>
<keyword id="KW-0808">Transferase</keyword>
<comment type="function">
    <text evidence="1">Involved in the regulation of the intracellular balance of NAD and NADP, and is a key enzyme in the biosynthesis of NADP. Catalyzes specifically the phosphorylation on 2'-hydroxyl of the adenosine moiety of NAD to yield NADP.</text>
</comment>
<comment type="catalytic activity">
    <reaction evidence="1">
        <text>NAD(+) + ATP = ADP + NADP(+) + H(+)</text>
        <dbReference type="Rhea" id="RHEA:18629"/>
        <dbReference type="ChEBI" id="CHEBI:15378"/>
        <dbReference type="ChEBI" id="CHEBI:30616"/>
        <dbReference type="ChEBI" id="CHEBI:57540"/>
        <dbReference type="ChEBI" id="CHEBI:58349"/>
        <dbReference type="ChEBI" id="CHEBI:456216"/>
        <dbReference type="EC" id="2.7.1.23"/>
    </reaction>
</comment>
<comment type="cofactor">
    <cofactor evidence="1">
        <name>a divalent metal cation</name>
        <dbReference type="ChEBI" id="CHEBI:60240"/>
    </cofactor>
</comment>
<comment type="subcellular location">
    <subcellularLocation>
        <location evidence="1">Cytoplasm</location>
    </subcellularLocation>
</comment>
<comment type="similarity">
    <text evidence="1">Belongs to the NAD kinase family.</text>
</comment>
<organism>
    <name type="scientific">Bacillus cereus (strain ATCC 14579 / DSM 31 / CCUG 7414 / JCM 2152 / NBRC 15305 / NCIMB 9373 / NCTC 2599 / NRRL B-3711)</name>
    <dbReference type="NCBI Taxonomy" id="226900"/>
    <lineage>
        <taxon>Bacteria</taxon>
        <taxon>Bacillati</taxon>
        <taxon>Bacillota</taxon>
        <taxon>Bacilli</taxon>
        <taxon>Bacillales</taxon>
        <taxon>Bacillaceae</taxon>
        <taxon>Bacillus</taxon>
        <taxon>Bacillus cereus group</taxon>
    </lineage>
</organism>
<gene>
    <name evidence="1" type="primary">nadK2</name>
    <name type="ordered locus">BC_4642</name>
</gene>
<accession>Q817B5</accession>
<proteinExistence type="inferred from homology"/>